<protein>
    <recommendedName>
        <fullName>Protein E4</fullName>
    </recommendedName>
</protein>
<feature type="chain" id="PRO_0000133281" description="Protein E4">
    <location>
        <begin position="1"/>
        <end position="127"/>
    </location>
</feature>
<feature type="region of interest" description="Disordered" evidence="2">
    <location>
        <begin position="1"/>
        <end position="93"/>
    </location>
</feature>
<feature type="compositionally biased region" description="Acidic residues" evidence="2">
    <location>
        <begin position="79"/>
        <end position="89"/>
    </location>
</feature>
<organism>
    <name type="scientific">Human papillomavirus 65</name>
    <dbReference type="NCBI Taxonomy" id="28312"/>
    <lineage>
        <taxon>Viruses</taxon>
        <taxon>Monodnaviria</taxon>
        <taxon>Shotokuvirae</taxon>
        <taxon>Cossaviricota</taxon>
        <taxon>Papovaviricetes</taxon>
        <taxon>Zurhausenvirales</taxon>
        <taxon>Papillomaviridae</taxon>
        <taxon>Firstpapillomavirinae</taxon>
        <taxon>Gammapapillomavirus</taxon>
        <taxon>Gammapapillomavirus 1</taxon>
    </lineage>
</organism>
<organismHost>
    <name type="scientific">Homo sapiens</name>
    <name type="common">Human</name>
    <dbReference type="NCBI Taxonomy" id="9606"/>
</organismHost>
<sequence length="127" mass="14578">MADKAQQTPPPSTLRNNNYPGPQHPPTPSLPRRALVVGGNRGNLNRPPQRPPKPRGYEYDEDDDKENQGPGQERPPAKEEEEEGEEEERPDWSLRHLLGKWESDIEQLKDKVCRDLDNYKLKLGIHP</sequence>
<proteinExistence type="inferred from homology"/>
<reference key="1">
    <citation type="journal article" date="1993" name="Virology">
        <title>Two novel types of human papillomavirus, HPV 63 and HPV 65: comparisons of their clinical and histological features and DNA sequences to other HPV types.</title>
        <authorList>
            <person name="Egawa K."/>
            <person name="Delius H."/>
            <person name="Matsukura T."/>
            <person name="Kawashima M."/>
            <person name="de Villiers E.M."/>
        </authorList>
    </citation>
    <scope>NUCLEOTIDE SEQUENCE [GENOMIC DNA]</scope>
</reference>
<evidence type="ECO:0000250" key="1">
    <source>
        <dbReference type="UniProtKB" id="P06922"/>
    </source>
</evidence>
<evidence type="ECO:0000256" key="2">
    <source>
        <dbReference type="SAM" id="MobiDB-lite"/>
    </source>
</evidence>
<evidence type="ECO:0000305" key="3"/>
<keyword id="KW-0244">Early protein</keyword>
<keyword id="KW-1035">Host cytoplasm</keyword>
<keyword id="KW-1079">Host G2/M cell cycle arrest by virus</keyword>
<keyword id="KW-1048">Host nucleus</keyword>
<keyword id="KW-0945">Host-virus interaction</keyword>
<keyword id="KW-1121">Modulation of host cell cycle by virus</keyword>
<keyword id="KW-0597">Phosphoprotein</keyword>
<gene>
    <name type="primary">E4</name>
</gene>
<accession>Q07873</accession>
<name>VE4_HPV65</name>
<dbReference type="EMBL" id="X70829">
    <property type="protein sequence ID" value="CAA50175.1"/>
    <property type="status" value="ALT_SEQ"/>
    <property type="molecule type" value="Genomic_DNA"/>
</dbReference>
<dbReference type="SMR" id="Q07873"/>
<dbReference type="Proteomes" id="UP000007672">
    <property type="component" value="Genome"/>
</dbReference>
<dbReference type="GO" id="GO:0030430">
    <property type="term" value="C:host cell cytoplasm"/>
    <property type="evidence" value="ECO:0007669"/>
    <property type="project" value="UniProtKB-SubCell"/>
</dbReference>
<dbReference type="GO" id="GO:0042025">
    <property type="term" value="C:host cell nucleus"/>
    <property type="evidence" value="ECO:0007669"/>
    <property type="project" value="UniProtKB-SubCell"/>
</dbReference>
<dbReference type="GO" id="GO:0039592">
    <property type="term" value="P:symbiont-mediated arrest of host cell cycle during G2/M transition"/>
    <property type="evidence" value="ECO:0007669"/>
    <property type="project" value="UniProtKB-KW"/>
</dbReference>
<comment type="function">
    <text evidence="1">Contributes to multiple aspects of the viral life cycle including viral genome amplification, suppression of suprabasal cell differentiation and egress of newly formed virions. Induces host cell cycle arrest at the G2 phase by associating with and preventing the nuclear entry of host CDK1/cyclin B1 complexes. Inhibits cellular DNA replication by preventing loading of host replication licensing proteins MCM2 and MCM7 onto chromatin. Within the cytoplasm, associates with host kinase SRPK1, a splicing factor regulator, and inhibits its activity. Therefore, E4 favors expression of late viral transcripts by inhibiting SRPK1-mediated phosphorylation of host serine-arginine (SR) proteins that have critical roles in mRNA metabolism. Late in the infectious cycle, E4 also acts to diminish the integrity of the keratinocyte by disrupting the keratin cytoskeleton and inducing apoptosis through alteration of mitochondrial function to facilitate egress of the newly formed virions.</text>
</comment>
<comment type="subunit">
    <text evidence="1">Assembles into oligomeric complexes. Interacts with host CDK1. Interacts with host SRPK1; this interaction may favor expression of late viral transcripts. Interacts with host cytokeratin components KRT8 and KRT18.</text>
</comment>
<comment type="subcellular location">
    <subcellularLocation>
        <location evidence="1">Host cytoplasm</location>
    </subcellularLocation>
    <subcellularLocation>
        <location evidence="1">Host nucleus</location>
    </subcellularLocation>
</comment>
<comment type="PTM">
    <text evidence="1">Phosphorylated by host ERK. The phosphorylation triggers a structural change that enhances keratin binding and protein stability.</text>
</comment>
<comment type="miscellaneous">
    <text evidence="1">The major E4 form is first synthesized as an E1^E4 fusion protein from spliced E1^E4 transcripts, such that the first few amino acids of the E4 protein are derived from the N terminus of E1.</text>
</comment>
<comment type="similarity">
    <text evidence="3">Belongs to the papillomaviridae E4 protein family.</text>
</comment>